<gene>
    <name evidence="1" type="primary">engB</name>
    <name type="ordered locus">Dhaf_4367</name>
</gene>
<feature type="chain" id="PRO_1000133053" description="Probable GTP-binding protein EngB">
    <location>
        <begin position="1"/>
        <end position="201"/>
    </location>
</feature>
<feature type="domain" description="EngB-type G" evidence="1">
    <location>
        <begin position="23"/>
        <end position="196"/>
    </location>
</feature>
<feature type="binding site" evidence="1">
    <location>
        <begin position="31"/>
        <end position="38"/>
    </location>
    <ligand>
        <name>GTP</name>
        <dbReference type="ChEBI" id="CHEBI:37565"/>
    </ligand>
</feature>
<feature type="binding site" evidence="1">
    <location>
        <position position="38"/>
    </location>
    <ligand>
        <name>Mg(2+)</name>
        <dbReference type="ChEBI" id="CHEBI:18420"/>
    </ligand>
</feature>
<feature type="binding site" evidence="1">
    <location>
        <begin position="58"/>
        <end position="62"/>
    </location>
    <ligand>
        <name>GTP</name>
        <dbReference type="ChEBI" id="CHEBI:37565"/>
    </ligand>
</feature>
<feature type="binding site" evidence="1">
    <location>
        <position position="60"/>
    </location>
    <ligand>
        <name>Mg(2+)</name>
        <dbReference type="ChEBI" id="CHEBI:18420"/>
    </ligand>
</feature>
<feature type="binding site" evidence="1">
    <location>
        <begin position="76"/>
        <end position="79"/>
    </location>
    <ligand>
        <name>GTP</name>
        <dbReference type="ChEBI" id="CHEBI:37565"/>
    </ligand>
</feature>
<feature type="binding site" evidence="1">
    <location>
        <begin position="143"/>
        <end position="146"/>
    </location>
    <ligand>
        <name>GTP</name>
        <dbReference type="ChEBI" id="CHEBI:37565"/>
    </ligand>
</feature>
<feature type="binding site" evidence="1">
    <location>
        <begin position="175"/>
        <end position="177"/>
    </location>
    <ligand>
        <name>GTP</name>
        <dbReference type="ChEBI" id="CHEBI:37565"/>
    </ligand>
</feature>
<accession>B8FVH0</accession>
<dbReference type="EMBL" id="CP001336">
    <property type="protein sequence ID" value="ACL22372.1"/>
    <property type="molecule type" value="Genomic_DNA"/>
</dbReference>
<dbReference type="SMR" id="B8FVH0"/>
<dbReference type="KEGG" id="dhd:Dhaf_4367"/>
<dbReference type="HOGENOM" id="CLU_033732_3_0_9"/>
<dbReference type="Proteomes" id="UP000007726">
    <property type="component" value="Chromosome"/>
</dbReference>
<dbReference type="GO" id="GO:0005829">
    <property type="term" value="C:cytosol"/>
    <property type="evidence" value="ECO:0007669"/>
    <property type="project" value="TreeGrafter"/>
</dbReference>
<dbReference type="GO" id="GO:0005525">
    <property type="term" value="F:GTP binding"/>
    <property type="evidence" value="ECO:0007669"/>
    <property type="project" value="UniProtKB-UniRule"/>
</dbReference>
<dbReference type="GO" id="GO:0046872">
    <property type="term" value="F:metal ion binding"/>
    <property type="evidence" value="ECO:0007669"/>
    <property type="project" value="UniProtKB-KW"/>
</dbReference>
<dbReference type="GO" id="GO:0000917">
    <property type="term" value="P:division septum assembly"/>
    <property type="evidence" value="ECO:0007669"/>
    <property type="project" value="UniProtKB-KW"/>
</dbReference>
<dbReference type="CDD" id="cd01876">
    <property type="entry name" value="YihA_EngB"/>
    <property type="match status" value="1"/>
</dbReference>
<dbReference type="FunFam" id="3.40.50.300:FF:000098">
    <property type="entry name" value="Probable GTP-binding protein EngB"/>
    <property type="match status" value="1"/>
</dbReference>
<dbReference type="Gene3D" id="3.40.50.300">
    <property type="entry name" value="P-loop containing nucleotide triphosphate hydrolases"/>
    <property type="match status" value="1"/>
</dbReference>
<dbReference type="HAMAP" id="MF_00321">
    <property type="entry name" value="GTPase_EngB"/>
    <property type="match status" value="1"/>
</dbReference>
<dbReference type="InterPro" id="IPR030393">
    <property type="entry name" value="G_ENGB_dom"/>
</dbReference>
<dbReference type="InterPro" id="IPR006073">
    <property type="entry name" value="GTP-bd"/>
</dbReference>
<dbReference type="InterPro" id="IPR019987">
    <property type="entry name" value="GTP-bd_ribosome_bio_YsxC"/>
</dbReference>
<dbReference type="InterPro" id="IPR027417">
    <property type="entry name" value="P-loop_NTPase"/>
</dbReference>
<dbReference type="NCBIfam" id="TIGR03598">
    <property type="entry name" value="GTPase_YsxC"/>
    <property type="match status" value="1"/>
</dbReference>
<dbReference type="PANTHER" id="PTHR11649:SF13">
    <property type="entry name" value="ENGB-TYPE G DOMAIN-CONTAINING PROTEIN"/>
    <property type="match status" value="1"/>
</dbReference>
<dbReference type="PANTHER" id="PTHR11649">
    <property type="entry name" value="MSS1/TRME-RELATED GTP-BINDING PROTEIN"/>
    <property type="match status" value="1"/>
</dbReference>
<dbReference type="Pfam" id="PF01926">
    <property type="entry name" value="MMR_HSR1"/>
    <property type="match status" value="1"/>
</dbReference>
<dbReference type="PRINTS" id="PR00449">
    <property type="entry name" value="RASTRNSFRMNG"/>
</dbReference>
<dbReference type="SUPFAM" id="SSF52540">
    <property type="entry name" value="P-loop containing nucleoside triphosphate hydrolases"/>
    <property type="match status" value="1"/>
</dbReference>
<dbReference type="PROSITE" id="PS51706">
    <property type="entry name" value="G_ENGB"/>
    <property type="match status" value="1"/>
</dbReference>
<evidence type="ECO:0000255" key="1">
    <source>
        <dbReference type="HAMAP-Rule" id="MF_00321"/>
    </source>
</evidence>
<protein>
    <recommendedName>
        <fullName evidence="1">Probable GTP-binding protein EngB</fullName>
    </recommendedName>
</protein>
<keyword id="KW-0131">Cell cycle</keyword>
<keyword id="KW-0132">Cell division</keyword>
<keyword id="KW-0342">GTP-binding</keyword>
<keyword id="KW-0460">Magnesium</keyword>
<keyword id="KW-0479">Metal-binding</keyword>
<keyword id="KW-0547">Nucleotide-binding</keyword>
<keyword id="KW-0717">Septation</keyword>
<reference key="1">
    <citation type="journal article" date="2012" name="BMC Microbiol.">
        <title>Genome sequence of Desulfitobacterium hafniense DCB-2, a Gram-positive anaerobe capable of dehalogenation and metal reduction.</title>
        <authorList>
            <person name="Kim S.H."/>
            <person name="Harzman C."/>
            <person name="Davis J.K."/>
            <person name="Hutcheson R."/>
            <person name="Broderick J.B."/>
            <person name="Marsh T.L."/>
            <person name="Tiedje J.M."/>
        </authorList>
    </citation>
    <scope>NUCLEOTIDE SEQUENCE [LARGE SCALE GENOMIC DNA]</scope>
    <source>
        <strain>DSM 10664 / DCB-2</strain>
    </source>
</reference>
<name>ENGB_DESHD</name>
<sequence>MITIRKAEFVTSAVNIKGYPELTGPEIALAGRSNVGKSSLINKFINRRNLARTGNTPGKTQMLNFYRINDQWSFVDLPGYGYAKVSKEIKANWGKMMEEYFSRRENLRAVIQVVDIRHVPSVEDQEMHAFLRNRGIPVLVVATKADKISKGQWGKHLSQIAKALHIPDWHIIITYSAETGLGVPELHEAVEEILSMDNEDS</sequence>
<proteinExistence type="inferred from homology"/>
<comment type="function">
    <text evidence="1">Necessary for normal cell division and for the maintenance of normal septation.</text>
</comment>
<comment type="cofactor">
    <cofactor evidence="1">
        <name>Mg(2+)</name>
        <dbReference type="ChEBI" id="CHEBI:18420"/>
    </cofactor>
</comment>
<comment type="similarity">
    <text evidence="1">Belongs to the TRAFAC class TrmE-Era-EngA-EngB-Septin-like GTPase superfamily. EngB GTPase family.</text>
</comment>
<organism>
    <name type="scientific">Desulfitobacterium hafniense (strain DSM 10664 / DCB-2)</name>
    <dbReference type="NCBI Taxonomy" id="272564"/>
    <lineage>
        <taxon>Bacteria</taxon>
        <taxon>Bacillati</taxon>
        <taxon>Bacillota</taxon>
        <taxon>Clostridia</taxon>
        <taxon>Eubacteriales</taxon>
        <taxon>Desulfitobacteriaceae</taxon>
        <taxon>Desulfitobacterium</taxon>
    </lineage>
</organism>